<dbReference type="EC" id="2.7.1.71" evidence="1"/>
<dbReference type="EMBL" id="CP000948">
    <property type="protein sequence ID" value="ACB04449.1"/>
    <property type="molecule type" value="Genomic_DNA"/>
</dbReference>
<dbReference type="RefSeq" id="WP_000818618.1">
    <property type="nucleotide sequence ID" value="NC_010473.1"/>
</dbReference>
<dbReference type="SMR" id="B1X737"/>
<dbReference type="GeneID" id="93778608"/>
<dbReference type="KEGG" id="ecd:ECDH10B_3565"/>
<dbReference type="HOGENOM" id="CLU_057607_2_2_6"/>
<dbReference type="UniPathway" id="UPA00053">
    <property type="reaction ID" value="UER00088"/>
</dbReference>
<dbReference type="GO" id="GO:0005829">
    <property type="term" value="C:cytosol"/>
    <property type="evidence" value="ECO:0007669"/>
    <property type="project" value="TreeGrafter"/>
</dbReference>
<dbReference type="GO" id="GO:0005524">
    <property type="term" value="F:ATP binding"/>
    <property type="evidence" value="ECO:0007669"/>
    <property type="project" value="UniProtKB-UniRule"/>
</dbReference>
<dbReference type="GO" id="GO:0000287">
    <property type="term" value="F:magnesium ion binding"/>
    <property type="evidence" value="ECO:0007669"/>
    <property type="project" value="UniProtKB-UniRule"/>
</dbReference>
<dbReference type="GO" id="GO:0004765">
    <property type="term" value="F:shikimate kinase activity"/>
    <property type="evidence" value="ECO:0007669"/>
    <property type="project" value="UniProtKB-UniRule"/>
</dbReference>
<dbReference type="GO" id="GO:0008652">
    <property type="term" value="P:amino acid biosynthetic process"/>
    <property type="evidence" value="ECO:0007669"/>
    <property type="project" value="UniProtKB-KW"/>
</dbReference>
<dbReference type="GO" id="GO:0009073">
    <property type="term" value="P:aromatic amino acid family biosynthetic process"/>
    <property type="evidence" value="ECO:0007669"/>
    <property type="project" value="UniProtKB-KW"/>
</dbReference>
<dbReference type="GO" id="GO:0009423">
    <property type="term" value="P:chorismate biosynthetic process"/>
    <property type="evidence" value="ECO:0007669"/>
    <property type="project" value="UniProtKB-UniRule"/>
</dbReference>
<dbReference type="CDD" id="cd00464">
    <property type="entry name" value="SK"/>
    <property type="match status" value="1"/>
</dbReference>
<dbReference type="FunFam" id="3.40.50.300:FF:000099">
    <property type="entry name" value="Shikimate kinase 1"/>
    <property type="match status" value="1"/>
</dbReference>
<dbReference type="Gene3D" id="3.40.50.300">
    <property type="entry name" value="P-loop containing nucleotide triphosphate hydrolases"/>
    <property type="match status" value="1"/>
</dbReference>
<dbReference type="HAMAP" id="MF_00109">
    <property type="entry name" value="Shikimate_kinase"/>
    <property type="match status" value="1"/>
</dbReference>
<dbReference type="InterPro" id="IPR027417">
    <property type="entry name" value="P-loop_NTPase"/>
</dbReference>
<dbReference type="InterPro" id="IPR031322">
    <property type="entry name" value="Shikimate/glucono_kinase"/>
</dbReference>
<dbReference type="InterPro" id="IPR000623">
    <property type="entry name" value="Shikimate_kinase/TSH1"/>
</dbReference>
<dbReference type="InterPro" id="IPR023000">
    <property type="entry name" value="Shikimate_kinase_CS"/>
</dbReference>
<dbReference type="NCBIfam" id="NF003456">
    <property type="entry name" value="PRK05057.1"/>
    <property type="match status" value="1"/>
</dbReference>
<dbReference type="PANTHER" id="PTHR21087">
    <property type="entry name" value="SHIKIMATE KINASE"/>
    <property type="match status" value="1"/>
</dbReference>
<dbReference type="PANTHER" id="PTHR21087:SF16">
    <property type="entry name" value="SHIKIMATE KINASE 1, CHLOROPLASTIC"/>
    <property type="match status" value="1"/>
</dbReference>
<dbReference type="Pfam" id="PF01202">
    <property type="entry name" value="SKI"/>
    <property type="match status" value="1"/>
</dbReference>
<dbReference type="PRINTS" id="PR01100">
    <property type="entry name" value="SHIKIMTKNASE"/>
</dbReference>
<dbReference type="SUPFAM" id="SSF52540">
    <property type="entry name" value="P-loop containing nucleoside triphosphate hydrolases"/>
    <property type="match status" value="1"/>
</dbReference>
<dbReference type="PROSITE" id="PS01128">
    <property type="entry name" value="SHIKIMATE_KINASE"/>
    <property type="match status" value="1"/>
</dbReference>
<reference key="1">
    <citation type="journal article" date="2008" name="J. Bacteriol.">
        <title>The complete genome sequence of Escherichia coli DH10B: insights into the biology of a laboratory workhorse.</title>
        <authorList>
            <person name="Durfee T."/>
            <person name="Nelson R."/>
            <person name="Baldwin S."/>
            <person name="Plunkett G. III"/>
            <person name="Burland V."/>
            <person name="Mau B."/>
            <person name="Petrosino J.F."/>
            <person name="Qin X."/>
            <person name="Muzny D.M."/>
            <person name="Ayele M."/>
            <person name="Gibbs R.A."/>
            <person name="Csorgo B."/>
            <person name="Posfai G."/>
            <person name="Weinstock G.M."/>
            <person name="Blattner F.R."/>
        </authorList>
    </citation>
    <scope>NUCLEOTIDE SEQUENCE [LARGE SCALE GENOMIC DNA]</scope>
    <source>
        <strain>K12 / DH10B</strain>
    </source>
</reference>
<feature type="chain" id="PRO_1000094388" description="Shikimate kinase 1">
    <location>
        <begin position="1"/>
        <end position="173"/>
    </location>
</feature>
<feature type="binding site" evidence="1">
    <location>
        <begin position="14"/>
        <end position="19"/>
    </location>
    <ligand>
        <name>ATP</name>
        <dbReference type="ChEBI" id="CHEBI:30616"/>
    </ligand>
</feature>
<feature type="binding site" evidence="1">
    <location>
        <position position="18"/>
    </location>
    <ligand>
        <name>Mg(2+)</name>
        <dbReference type="ChEBI" id="CHEBI:18420"/>
    </ligand>
</feature>
<feature type="binding site" evidence="1">
    <location>
        <position position="36"/>
    </location>
    <ligand>
        <name>substrate</name>
    </ligand>
</feature>
<feature type="binding site" evidence="1">
    <location>
        <position position="60"/>
    </location>
    <ligand>
        <name>substrate</name>
    </ligand>
</feature>
<feature type="binding site" evidence="1">
    <location>
        <position position="82"/>
    </location>
    <ligand>
        <name>substrate</name>
    </ligand>
</feature>
<feature type="binding site" evidence="1">
    <location>
        <position position="120"/>
    </location>
    <ligand>
        <name>ATP</name>
        <dbReference type="ChEBI" id="CHEBI:30616"/>
    </ligand>
</feature>
<feature type="binding site" evidence="1">
    <location>
        <position position="140"/>
    </location>
    <ligand>
        <name>substrate</name>
    </ligand>
</feature>
<feature type="binding site" evidence="1">
    <location>
        <position position="157"/>
    </location>
    <ligand>
        <name>ATP</name>
        <dbReference type="ChEBI" id="CHEBI:30616"/>
    </ligand>
</feature>
<organism>
    <name type="scientific">Escherichia coli (strain K12 / DH10B)</name>
    <dbReference type="NCBI Taxonomy" id="316385"/>
    <lineage>
        <taxon>Bacteria</taxon>
        <taxon>Pseudomonadati</taxon>
        <taxon>Pseudomonadota</taxon>
        <taxon>Gammaproteobacteria</taxon>
        <taxon>Enterobacterales</taxon>
        <taxon>Enterobacteriaceae</taxon>
        <taxon>Escherichia</taxon>
    </lineage>
</organism>
<proteinExistence type="inferred from homology"/>
<accession>B1X737</accession>
<keyword id="KW-0028">Amino-acid biosynthesis</keyword>
<keyword id="KW-0057">Aromatic amino acid biosynthesis</keyword>
<keyword id="KW-0067">ATP-binding</keyword>
<keyword id="KW-0963">Cytoplasm</keyword>
<keyword id="KW-0418">Kinase</keyword>
<keyword id="KW-0460">Magnesium</keyword>
<keyword id="KW-0479">Metal-binding</keyword>
<keyword id="KW-0547">Nucleotide-binding</keyword>
<keyword id="KW-0808">Transferase</keyword>
<protein>
    <recommendedName>
        <fullName evidence="1">Shikimate kinase 1</fullName>
        <shortName evidence="1">SK 1</shortName>
        <ecNumber evidence="1">2.7.1.71</ecNumber>
    </recommendedName>
</protein>
<evidence type="ECO:0000255" key="1">
    <source>
        <dbReference type="HAMAP-Rule" id="MF_00109"/>
    </source>
</evidence>
<name>AROK_ECODH</name>
<sequence>MAEKRNIFLVGPMGAGKSTIGRQLAQQLNMEFYDSDQEIEKRTGADVGWVFDLEGEEGFRDREEKVINELTEKQGIVLATGGGSVKSRETRNRLSARGVVVYLETTIEKQLARTQRDKKRPLLHVETPPREVLEALANERNPLYEEIADVTIRTDDQSAKVVANQIIHMLESN</sequence>
<comment type="function">
    <text evidence="1">Catalyzes the specific phosphorylation of the 3-hydroxyl group of shikimic acid using ATP as a cosubstrate.</text>
</comment>
<comment type="catalytic activity">
    <reaction evidence="1">
        <text>shikimate + ATP = 3-phosphoshikimate + ADP + H(+)</text>
        <dbReference type="Rhea" id="RHEA:13121"/>
        <dbReference type="ChEBI" id="CHEBI:15378"/>
        <dbReference type="ChEBI" id="CHEBI:30616"/>
        <dbReference type="ChEBI" id="CHEBI:36208"/>
        <dbReference type="ChEBI" id="CHEBI:145989"/>
        <dbReference type="ChEBI" id="CHEBI:456216"/>
        <dbReference type="EC" id="2.7.1.71"/>
    </reaction>
</comment>
<comment type="cofactor">
    <cofactor evidence="1">
        <name>Mg(2+)</name>
        <dbReference type="ChEBI" id="CHEBI:18420"/>
    </cofactor>
    <text evidence="1">Binds 1 Mg(2+) ion per subunit.</text>
</comment>
<comment type="pathway">
    <text evidence="1">Metabolic intermediate biosynthesis; chorismate biosynthesis; chorismate from D-erythrose 4-phosphate and phosphoenolpyruvate: step 5/7.</text>
</comment>
<comment type="subunit">
    <text evidence="1">Monomer.</text>
</comment>
<comment type="subcellular location">
    <subcellularLocation>
        <location evidence="1">Cytoplasm</location>
    </subcellularLocation>
</comment>
<comment type="similarity">
    <text evidence="1">Belongs to the shikimate kinase family.</text>
</comment>
<gene>
    <name evidence="1" type="primary">aroK</name>
    <name type="ordered locus">ECDH10B_3565</name>
</gene>